<proteinExistence type="evidence at protein level"/>
<name>RS19A_CANAL</name>
<gene>
    <name type="primary">RPS19A</name>
    <name type="ordered locus">orf19.5996.1</name>
    <name type="ORF">CAALFM_C305200WA</name>
</gene>
<dbReference type="EMBL" id="CP017625">
    <property type="protein sequence ID" value="AOW28535.1"/>
    <property type="molecule type" value="Genomic_DNA"/>
</dbReference>
<dbReference type="RefSeq" id="XP_019330873.1">
    <property type="nucleotide sequence ID" value="XM_019475328.1"/>
</dbReference>
<dbReference type="PDB" id="7PZY">
    <property type="method" value="EM"/>
    <property type="resolution" value="2.32 A"/>
    <property type="chains" value="U=1-145"/>
</dbReference>
<dbReference type="PDB" id="7Q08">
    <property type="method" value="EM"/>
    <property type="resolution" value="2.56 A"/>
    <property type="chains" value="U=1-145"/>
</dbReference>
<dbReference type="PDB" id="7Q0F">
    <property type="method" value="EM"/>
    <property type="resolution" value="2.64 A"/>
    <property type="chains" value="U=1-145"/>
</dbReference>
<dbReference type="PDB" id="7Q0P">
    <property type="method" value="EM"/>
    <property type="resolution" value="2.77 A"/>
    <property type="chains" value="U=1-145"/>
</dbReference>
<dbReference type="PDB" id="7Q0R">
    <property type="method" value="EM"/>
    <property type="resolution" value="2.67 A"/>
    <property type="chains" value="U=1-145"/>
</dbReference>
<dbReference type="PDB" id="8C3A">
    <property type="method" value="X-ray"/>
    <property type="resolution" value="3.00 A"/>
    <property type="chains" value="DG/V=1-145"/>
</dbReference>
<dbReference type="PDB" id="8OGJ">
    <property type="method" value="EM"/>
    <property type="resolution" value="3.10 A"/>
    <property type="chains" value="U=1-145"/>
</dbReference>
<dbReference type="PDB" id="8OH6">
    <property type="method" value="X-ray"/>
    <property type="resolution" value="3.35 A"/>
    <property type="chains" value="DG/V=1-145"/>
</dbReference>
<dbReference type="PDB" id="8OI5">
    <property type="method" value="X-ray"/>
    <property type="resolution" value="2.90 A"/>
    <property type="chains" value="DG/V=1-145"/>
</dbReference>
<dbReference type="PDB" id="8OJ3">
    <property type="method" value="X-ray"/>
    <property type="resolution" value="3.50 A"/>
    <property type="chains" value="DG/V=1-145"/>
</dbReference>
<dbReference type="PDBsum" id="7PZY"/>
<dbReference type="PDBsum" id="7Q08"/>
<dbReference type="PDBsum" id="7Q0F"/>
<dbReference type="PDBsum" id="7Q0P"/>
<dbReference type="PDBsum" id="7Q0R"/>
<dbReference type="PDBsum" id="8C3A"/>
<dbReference type="PDBsum" id="8OGJ"/>
<dbReference type="PDBsum" id="8OH6"/>
<dbReference type="PDBsum" id="8OI5"/>
<dbReference type="PDBsum" id="8OJ3"/>
<dbReference type="EMDB" id="EMD-13737"/>
<dbReference type="EMDB" id="EMD-13741"/>
<dbReference type="EMDB" id="EMD-13744"/>
<dbReference type="EMDB" id="EMD-13749"/>
<dbReference type="EMDB" id="EMD-13750"/>
<dbReference type="SMR" id="A0A1D8PK61"/>
<dbReference type="FunCoup" id="A0A1D8PK61">
    <property type="interactions" value="880"/>
</dbReference>
<dbReference type="STRING" id="237561.A0A1D8PK61"/>
<dbReference type="EnsemblFungi" id="C3_05200W_A-T">
    <property type="protein sequence ID" value="C3_05200W_A-T-p1"/>
    <property type="gene ID" value="C3_05200W_A"/>
</dbReference>
<dbReference type="GeneID" id="30515208"/>
<dbReference type="KEGG" id="cal:CAALFM_C305200WA"/>
<dbReference type="CGD" id="CAL0000200926">
    <property type="gene designation" value="RPS19A"/>
</dbReference>
<dbReference type="VEuPathDB" id="FungiDB:C3_05200W_A"/>
<dbReference type="eggNOG" id="KOG3411">
    <property type="taxonomic scope" value="Eukaryota"/>
</dbReference>
<dbReference type="InParanoid" id="A0A1D8PK61"/>
<dbReference type="OMA" id="WAPFVKT"/>
<dbReference type="OrthoDB" id="428974at2759"/>
<dbReference type="Proteomes" id="UP000000559">
    <property type="component" value="Chromosome 3"/>
</dbReference>
<dbReference type="GO" id="GO:0022627">
    <property type="term" value="C:cytosolic small ribosomal subunit"/>
    <property type="evidence" value="ECO:0000318"/>
    <property type="project" value="GO_Central"/>
</dbReference>
<dbReference type="GO" id="GO:0003723">
    <property type="term" value="F:RNA binding"/>
    <property type="evidence" value="ECO:0000318"/>
    <property type="project" value="GO_Central"/>
</dbReference>
<dbReference type="GO" id="GO:0003735">
    <property type="term" value="F:structural constituent of ribosome"/>
    <property type="evidence" value="ECO:0000318"/>
    <property type="project" value="GO_Central"/>
</dbReference>
<dbReference type="GO" id="GO:0000028">
    <property type="term" value="P:ribosomal small subunit assembly"/>
    <property type="evidence" value="ECO:0000318"/>
    <property type="project" value="GO_Central"/>
</dbReference>
<dbReference type="GO" id="GO:0006412">
    <property type="term" value="P:translation"/>
    <property type="evidence" value="ECO:0007669"/>
    <property type="project" value="InterPro"/>
</dbReference>
<dbReference type="FunFam" id="1.10.10.10:FF:000118">
    <property type="entry name" value="40S ribosomal protein S19"/>
    <property type="match status" value="1"/>
</dbReference>
<dbReference type="Gene3D" id="1.10.10.10">
    <property type="entry name" value="Winged helix-like DNA-binding domain superfamily/Winged helix DNA-binding domain"/>
    <property type="match status" value="1"/>
</dbReference>
<dbReference type="InterPro" id="IPR001266">
    <property type="entry name" value="Ribosomal_eS19"/>
</dbReference>
<dbReference type="InterPro" id="IPR036388">
    <property type="entry name" value="WH-like_DNA-bd_sf"/>
</dbReference>
<dbReference type="InterPro" id="IPR036390">
    <property type="entry name" value="WH_DNA-bd_sf"/>
</dbReference>
<dbReference type="PANTHER" id="PTHR11710">
    <property type="entry name" value="40S RIBOSOMAL PROTEIN S19"/>
    <property type="match status" value="1"/>
</dbReference>
<dbReference type="PANTHER" id="PTHR11710:SF0">
    <property type="entry name" value="40S RIBOSOMAL PROTEIN S19"/>
    <property type="match status" value="1"/>
</dbReference>
<dbReference type="Pfam" id="PF01090">
    <property type="entry name" value="Ribosomal_S19e"/>
    <property type="match status" value="1"/>
</dbReference>
<dbReference type="SMART" id="SM01413">
    <property type="entry name" value="Ribosomal_S19e"/>
    <property type="match status" value="1"/>
</dbReference>
<dbReference type="SUPFAM" id="SSF46785">
    <property type="entry name" value="Winged helix' DNA-binding domain"/>
    <property type="match status" value="1"/>
</dbReference>
<feature type="chain" id="PRO_0000456557" description="Small ribosomal subunit protein eS19">
    <location>
        <begin position="1"/>
        <end position="145"/>
    </location>
</feature>
<feature type="region of interest" description="Disordered" evidence="2">
    <location>
        <begin position="120"/>
        <end position="145"/>
    </location>
</feature>
<feature type="compositionally biased region" description="Basic and acidic residues" evidence="2">
    <location>
        <begin position="123"/>
        <end position="134"/>
    </location>
</feature>
<keyword id="KW-0002">3D-structure</keyword>
<keyword id="KW-0963">Cytoplasm</keyword>
<keyword id="KW-1185">Reference proteome</keyword>
<keyword id="KW-0687">Ribonucleoprotein</keyword>
<keyword id="KW-0689">Ribosomal protein</keyword>
<reference key="1">
    <citation type="journal article" date="2004" name="Proc. Natl. Acad. Sci. U.S.A.">
        <title>The diploid genome sequence of Candida albicans.</title>
        <authorList>
            <person name="Jones T."/>
            <person name="Federspiel N.A."/>
            <person name="Chibana H."/>
            <person name="Dungan J."/>
            <person name="Kalman S."/>
            <person name="Magee B.B."/>
            <person name="Newport G."/>
            <person name="Thorstenson Y.R."/>
            <person name="Agabian N."/>
            <person name="Magee P.T."/>
            <person name="Davis R.W."/>
            <person name="Scherer S."/>
        </authorList>
    </citation>
    <scope>NUCLEOTIDE SEQUENCE [LARGE SCALE GENOMIC DNA]</scope>
    <source>
        <strain>SC5314 / ATCC MYA-2876</strain>
    </source>
</reference>
<reference key="2">
    <citation type="journal article" date="2007" name="Genome Biol.">
        <title>Assembly of the Candida albicans genome into sixteen supercontigs aligned on the eight chromosomes.</title>
        <authorList>
            <person name="van het Hoog M."/>
            <person name="Rast T.J."/>
            <person name="Martchenko M."/>
            <person name="Grindle S."/>
            <person name="Dignard D."/>
            <person name="Hogues H."/>
            <person name="Cuomo C."/>
            <person name="Berriman M."/>
            <person name="Scherer S."/>
            <person name="Magee B.B."/>
            <person name="Whiteway M."/>
            <person name="Chibana H."/>
            <person name="Nantel A."/>
            <person name="Magee P.T."/>
        </authorList>
    </citation>
    <scope>GENOME REANNOTATION</scope>
    <source>
        <strain>SC5314 / ATCC MYA-2876</strain>
    </source>
</reference>
<reference key="3">
    <citation type="journal article" date="2013" name="Genome Biol.">
        <title>Assembly of a phased diploid Candida albicans genome facilitates allele-specific measurements and provides a simple model for repeat and indel structure.</title>
        <authorList>
            <person name="Muzzey D."/>
            <person name="Schwartz K."/>
            <person name="Weissman J.S."/>
            <person name="Sherlock G."/>
        </authorList>
    </citation>
    <scope>NUCLEOTIDE SEQUENCE [LARGE SCALE GENOMIC DNA]</scope>
    <scope>GENOME REANNOTATION</scope>
    <source>
        <strain>SC5314 / ATCC MYA-2876</strain>
    </source>
</reference>
<reference evidence="7 8 9" key="4">
    <citation type="journal article" date="2022" name="Sci. Adv.">
        <title>E-site drug specificity of the human pathogen Candida albicans ribosome.</title>
        <authorList>
            <person name="Zgadzay Y."/>
            <person name="Kolosova O."/>
            <person name="Stetsenko A."/>
            <person name="Wu C."/>
            <person name="Bruchlen D."/>
            <person name="Usachev K."/>
            <person name="Validov S."/>
            <person name="Jenner L."/>
            <person name="Rogachev A."/>
            <person name="Yusupova G."/>
            <person name="Sachs M.S."/>
            <person name="Guskov A."/>
            <person name="Yusupov M."/>
        </authorList>
    </citation>
    <scope>STRUCTURE BY ELECTRON MICROSCOPY (2.32 ANGSTROMS) OF THE 80S RIBOSOME</scope>
    <scope>SUBUNIT</scope>
</reference>
<protein>
    <recommendedName>
        <fullName evidence="4">Small ribosomal subunit protein eS19</fullName>
    </recommendedName>
    <alternativeName>
        <fullName>40S ribosomal protein S19A</fullName>
    </alternativeName>
</protein>
<comment type="function">
    <text evidence="1 6">Component of the ribosome, a large ribonucleoprotein complex responsible for the synthesis of proteins in the cell. The small ribosomal subunit (SSU) binds messenger RNAs (mRNAs) and translates the encoded message by selecting cognate aminoacyl-transfer RNA (tRNA) molecules. The large subunit (LSU) contains the ribosomal catalytic site termed the peptidyl transferase center (PTC), which catalyzes the formation of peptide bonds, thereby polymerizing the amino acids delivered by tRNAs into a polypeptide chain. The nascent polypeptides leave the ribosome through a tunnel in the LSU and interact with protein factors that function in enzymatic processing, targeting, and the membrane insertion of nascent chains at the exit of the ribosomal tunnel (Probable). RPS19A is required for proper maturation of the small (40S) ribosomal subunit (By similarity).</text>
</comment>
<comment type="subunit">
    <text evidence="3">Component of the small ribosomal subunit (PubMed:35613268). Mature ribosomes consist of a small (40S) and a large (60S) subunit (PubMed:35613268). The 40S subunit contains about 32 different proteins and 1 molecule of RNA (18S) (PubMed:35613268). The 60S subunit contains 45 different proteins and 3 molecules of RNA (25S, 5.8S and 5S) (PubMed:35613268).</text>
</comment>
<comment type="subcellular location">
    <subcellularLocation>
        <location evidence="6">Cytoplasm</location>
    </subcellularLocation>
</comment>
<comment type="similarity">
    <text evidence="5">Belongs to the eukaryotic ribosomal protein eS19 family.</text>
</comment>
<accession>A0A1D8PK61</accession>
<sequence length="145" mass="16072">MPGVSVRDVPAQDFINAYAQFLQRQGKLEVPGYVDIVKTSAGNDLPPQEAETWFYKRAASIARHIYLRKQVGVGALNKLYGGAKNRGFRPHKHVDASGSINRKCVQALQKIGVLEISPKGGRRISENGQRDLDRIAAQTLEEDDE</sequence>
<evidence type="ECO:0000250" key="1">
    <source>
        <dbReference type="UniProtKB" id="P07280"/>
    </source>
</evidence>
<evidence type="ECO:0000256" key="2">
    <source>
        <dbReference type="SAM" id="MobiDB-lite"/>
    </source>
</evidence>
<evidence type="ECO:0000269" key="3">
    <source>
    </source>
</evidence>
<evidence type="ECO:0000303" key="4">
    <source>
    </source>
</evidence>
<evidence type="ECO:0000305" key="5"/>
<evidence type="ECO:0000305" key="6">
    <source>
    </source>
</evidence>
<evidence type="ECO:0007744" key="7">
    <source>
        <dbReference type="PDB" id="7PZY"/>
    </source>
</evidence>
<evidence type="ECO:0007744" key="8">
    <source>
        <dbReference type="PDB" id="7Q0F"/>
    </source>
</evidence>
<evidence type="ECO:0007744" key="9">
    <source>
        <dbReference type="PDB" id="7Q0P"/>
    </source>
</evidence>
<organism>
    <name type="scientific">Candida albicans (strain SC5314 / ATCC MYA-2876)</name>
    <name type="common">Yeast</name>
    <dbReference type="NCBI Taxonomy" id="237561"/>
    <lineage>
        <taxon>Eukaryota</taxon>
        <taxon>Fungi</taxon>
        <taxon>Dikarya</taxon>
        <taxon>Ascomycota</taxon>
        <taxon>Saccharomycotina</taxon>
        <taxon>Pichiomycetes</taxon>
        <taxon>Debaryomycetaceae</taxon>
        <taxon>Candida/Lodderomyces clade</taxon>
        <taxon>Candida</taxon>
    </lineage>
</organism>